<evidence type="ECO:0000250" key="1">
    <source>
        <dbReference type="UniProtKB" id="Q8BGR2"/>
    </source>
</evidence>
<evidence type="ECO:0000256" key="2">
    <source>
        <dbReference type="SAM" id="MobiDB-lite"/>
    </source>
</evidence>
<evidence type="ECO:0000269" key="3">
    <source>
    </source>
</evidence>
<evidence type="ECO:0000269" key="4">
    <source>
    </source>
</evidence>
<evidence type="ECO:0000269" key="5">
    <source>
    </source>
</evidence>
<evidence type="ECO:0000269" key="6">
    <source>
    </source>
</evidence>
<evidence type="ECO:0000269" key="7">
    <source>
    </source>
</evidence>
<evidence type="ECO:0000269" key="8">
    <source>
    </source>
</evidence>
<evidence type="ECO:0000269" key="9">
    <source>
    </source>
</evidence>
<evidence type="ECO:0000303" key="10">
    <source>
    </source>
</evidence>
<evidence type="ECO:0000303" key="11">
    <source>
    </source>
</evidence>
<evidence type="ECO:0000303" key="12">
    <source>
    </source>
</evidence>
<evidence type="ECO:0000305" key="13"/>
<evidence type="ECO:0000305" key="14">
    <source>
    </source>
</evidence>
<evidence type="ECO:0000305" key="15">
    <source>
    </source>
</evidence>
<evidence type="ECO:0000312" key="16">
    <source>
        <dbReference type="HGNC" id="HGNC:16992"/>
    </source>
</evidence>
<evidence type="ECO:0007744" key="17">
    <source>
        <dbReference type="PDB" id="6M04"/>
    </source>
</evidence>
<evidence type="ECO:0007744" key="18">
    <source>
    </source>
</evidence>
<evidence type="ECO:0007744" key="19">
    <source>
    </source>
</evidence>
<evidence type="ECO:0007744" key="20">
    <source>
    </source>
</evidence>
<comment type="function">
    <text evidence="1 3 4 5 6 7 8 9">Non-essential component of the volume-regulated anion channel (VRAC, also named VSOAC channel), an anion channel required to maintain a constant cell volume in response to extracellular or intracellular osmotic changes (PubMed:24790029, PubMed:26530471, PubMed:26824658, PubMed:28193731, PubMed:32415200). The VRAC channel conducts iodide better than chloride and can also conduct organic osmolytes like taurine (PubMed:24790029, PubMed:26824658, PubMed:28193731). Plays a redundant role in the efflux of amino acids, such as aspartate, in response to osmotic stress (PubMed:28193731). LRRC8A and LRRC8D are required for the uptake of the drug cisplatin (PubMed:26530471). Channel activity requires LRRC8A plus at least one other family member (LRRC8B, LRRC8C, LRRC8D or LRRC8E); channel characteristics depend on the precise subunit composition (PubMed:24782309, PubMed:24790029, PubMed:26824658, PubMed:28193731). Also acts as a regulator of glucose-sensing in pancreatic beta cells: VRAC currents, generated in response to hypotonicity- or glucose-induced beta cell swelling, depolarize cells, thereby causing electrical excitation, leading to increase glucose sensitivity and insulin secretion (By similarity). VRAC channels containing LRRC8D inhibit transport of immunoreactive cyclic dinucleotide GMP-AMP (2'-3'-cGAMP), an immune messenger produced in response to DNA virus in the cytosol (PubMed:33171122). Mediates the import of the antibiotic blasticidin-S into the cell (PubMed:24782309).</text>
</comment>
<comment type="catalytic activity">
    <reaction evidence="14">
        <text>chloride(in) = chloride(out)</text>
        <dbReference type="Rhea" id="RHEA:29823"/>
        <dbReference type="ChEBI" id="CHEBI:17996"/>
    </reaction>
</comment>
<comment type="catalytic activity">
    <reaction evidence="14">
        <text>iodide(out) = iodide(in)</text>
        <dbReference type="Rhea" id="RHEA:66324"/>
        <dbReference type="ChEBI" id="CHEBI:16382"/>
    </reaction>
</comment>
<comment type="catalytic activity">
    <reaction evidence="14">
        <text>taurine(out) = taurine(in)</text>
        <dbReference type="Rhea" id="RHEA:66328"/>
        <dbReference type="ChEBI" id="CHEBI:507393"/>
    </reaction>
</comment>
<comment type="subunit">
    <text evidence="1 3 4 5 6 7 8">Heterohexamer; oligomerizes with other LRRC8 proteins (LRRC8A, LRRC8B, LRRC8C and/or LRRC8E) to form a heterohexamer (PubMed:24782309, PubMed:26530471, PubMed:26824658, PubMed:28193731, PubMed:32415200). In vivo, the subunit composition may depend primarily on expression levels, and heterooligomeric channels containing various proportions of the different LRRC8 proteins may coexist (By similarity).</text>
</comment>
<comment type="interaction">
    <interactant intactId="EBI-861997">
        <id>Q7L1W4</id>
    </interactant>
    <interactant intactId="EBI-10970086">
        <id>Q8IWT6</id>
        <label>LRRC8A</label>
    </interactant>
    <organismsDiffer>false</organismsDiffer>
    <experiments>2</experiments>
</comment>
<comment type="subcellular location">
    <subcellularLocation>
        <location evidence="3 4 7">Cell membrane</location>
        <topology evidence="8">Multi-pass membrane protein</topology>
    </subcellularLocation>
    <subcellularLocation>
        <location evidence="3 14">Endoplasmic reticulum membrane</location>
        <topology evidence="8">Multi-pass membrane protein</topology>
    </subcellularLocation>
    <text evidence="3 4">In the absence of LRRC8A, resides primarily in a cytoplasmic compartment, probably the endoplasmic reticulum (PubMed:24782309, PubMed:24790029). Requires LRRC8A for expression at the cell membrane (PubMed:24790029).</text>
</comment>
<comment type="domain">
    <text evidence="8">The volume-regulated anion channel (VRAC) channel forms a trimer of dimers, with symmetry mismatch between the pore-forming domain and the cytosolic LRR repeats, a topology similar to gap junction proteins.</text>
</comment>
<comment type="similarity">
    <text evidence="13">Belongs to the LRRC8 family.</text>
</comment>
<comment type="sequence caution" evidence="13">
    <conflict type="erroneous initiation">
        <sequence resource="EMBL-CDS" id="AAQ89233"/>
    </conflict>
</comment>
<comment type="sequence caution" evidence="13">
    <conflict type="erroneous initiation">
        <sequence resource="EMBL-CDS" id="BAA91631"/>
    </conflict>
</comment>
<organism>
    <name type="scientific">Homo sapiens</name>
    <name type="common">Human</name>
    <dbReference type="NCBI Taxonomy" id="9606"/>
    <lineage>
        <taxon>Eukaryota</taxon>
        <taxon>Metazoa</taxon>
        <taxon>Chordata</taxon>
        <taxon>Craniata</taxon>
        <taxon>Vertebrata</taxon>
        <taxon>Euteleostomi</taxon>
        <taxon>Mammalia</taxon>
        <taxon>Eutheria</taxon>
        <taxon>Euarchontoglires</taxon>
        <taxon>Primates</taxon>
        <taxon>Haplorrhini</taxon>
        <taxon>Catarrhini</taxon>
        <taxon>Hominidae</taxon>
        <taxon>Homo</taxon>
    </lineage>
</organism>
<feature type="chain" id="PRO_0000084493" description="Volume-regulated anion channel subunit LRRC8D">
    <location>
        <begin position="1"/>
        <end position="858"/>
    </location>
</feature>
<feature type="topological domain" description="Cytoplasmic" evidence="15 17">
    <location>
        <begin position="1"/>
        <end position="22"/>
    </location>
</feature>
<feature type="transmembrane region" description="Helical; Name=1" evidence="15 17">
    <location>
        <begin position="23"/>
        <end position="48"/>
    </location>
</feature>
<feature type="topological domain" description="Extracellular" evidence="15 17">
    <location>
        <begin position="49"/>
        <end position="163"/>
    </location>
</feature>
<feature type="transmembrane region" description="Helical; Name=2" evidence="15 17">
    <location>
        <begin position="164"/>
        <end position="182"/>
    </location>
</feature>
<feature type="topological domain" description="Cytoplasmic" evidence="15 17">
    <location>
        <begin position="183"/>
        <end position="308"/>
    </location>
</feature>
<feature type="transmembrane region" description="Helical; Name=3" evidence="15 17">
    <location>
        <begin position="309"/>
        <end position="328"/>
    </location>
</feature>
<feature type="topological domain" description="Extracellular" evidence="15 17">
    <location>
        <begin position="329"/>
        <end position="360"/>
    </location>
</feature>
<feature type="transmembrane region" description="Helical; Name=4" evidence="15 17">
    <location>
        <begin position="361"/>
        <end position="386"/>
    </location>
</feature>
<feature type="topological domain" description="Cytoplasmic" evidence="15 17">
    <location>
        <begin position="387"/>
        <end position="858"/>
    </location>
</feature>
<feature type="repeat" description="LRR 1">
    <location>
        <begin position="514"/>
        <end position="534"/>
    </location>
</feature>
<feature type="repeat" description="LRR 2">
    <location>
        <begin position="538"/>
        <end position="559"/>
    </location>
</feature>
<feature type="repeat" description="LRR 3">
    <location>
        <begin position="561"/>
        <end position="582"/>
    </location>
</feature>
<feature type="repeat" description="LRR 4">
    <location>
        <begin position="589"/>
        <end position="609"/>
    </location>
</feature>
<feature type="repeat" description="LRR 5">
    <location>
        <begin position="612"/>
        <end position="632"/>
    </location>
</feature>
<feature type="repeat" description="LRR 6">
    <location>
        <begin position="636"/>
        <end position="657"/>
    </location>
</feature>
<feature type="repeat" description="LRR 7">
    <location>
        <begin position="659"/>
        <end position="680"/>
    </location>
</feature>
<feature type="repeat" description="LRR 8">
    <location>
        <begin position="684"/>
        <end position="705"/>
    </location>
</feature>
<feature type="repeat" description="LRR 9">
    <location>
        <begin position="707"/>
        <end position="728"/>
    </location>
</feature>
<feature type="repeat" description="LRR 10">
    <location>
        <begin position="730"/>
        <end position="751"/>
    </location>
</feature>
<feature type="repeat" description="LRR 11">
    <location>
        <begin position="753"/>
        <end position="774"/>
    </location>
</feature>
<feature type="repeat" description="LRR 12">
    <location>
        <begin position="776"/>
        <end position="797"/>
    </location>
</feature>
<feature type="repeat" description="LRR 13">
    <location>
        <begin position="799"/>
        <end position="820"/>
    </location>
</feature>
<feature type="region of interest" description="Disordered" evidence="2">
    <location>
        <begin position="221"/>
        <end position="251"/>
    </location>
</feature>
<feature type="compositionally biased region" description="Polar residues" evidence="2">
    <location>
        <begin position="227"/>
        <end position="251"/>
    </location>
</feature>
<feature type="modified residue" description="Phosphoserine" evidence="18">
    <location>
        <position position="241"/>
    </location>
</feature>
<feature type="modified residue" description="Phosphoserine" evidence="18">
    <location>
        <position position="242"/>
    </location>
</feature>
<feature type="modified residue" description="Phosphoserine" evidence="19 20">
    <location>
        <position position="246"/>
    </location>
</feature>
<feature type="disulfide bond" evidence="8 17">
    <location>
        <begin position="54"/>
        <end position="354"/>
    </location>
</feature>
<feature type="sequence variant" id="VAR_051132" description="In dbSNP:rs11552246.">
    <original>S</original>
    <variation>Y</variation>
    <location>
        <position position="371"/>
    </location>
</feature>
<feature type="mutagenesis site" description="Alters channel anion selectivity." evidence="6">
    <original>T</original>
    <variation>C</variation>
    <location>
        <position position="44"/>
    </location>
</feature>
<feature type="mutagenesis site" description="Affects ion selectivity of the channel. Reduced permeability to negatively charged glutamate and gluconate." evidence="8">
    <original>F</original>
    <variation>R</variation>
    <location>
        <position position="143"/>
    </location>
</feature>
<reference key="1">
    <citation type="journal article" date="2006" name="Nature">
        <title>The DNA sequence and biological annotation of human chromosome 1.</title>
        <authorList>
            <person name="Gregory S.G."/>
            <person name="Barlow K.F."/>
            <person name="McLay K.E."/>
            <person name="Kaul R."/>
            <person name="Swarbreck D."/>
            <person name="Dunham A."/>
            <person name="Scott C.E."/>
            <person name="Howe K.L."/>
            <person name="Woodfine K."/>
            <person name="Spencer C.C.A."/>
            <person name="Jones M.C."/>
            <person name="Gillson C."/>
            <person name="Searle S."/>
            <person name="Zhou Y."/>
            <person name="Kokocinski F."/>
            <person name="McDonald L."/>
            <person name="Evans R."/>
            <person name="Phillips K."/>
            <person name="Atkinson A."/>
            <person name="Cooper R."/>
            <person name="Jones C."/>
            <person name="Hall R.E."/>
            <person name="Andrews T.D."/>
            <person name="Lloyd C."/>
            <person name="Ainscough R."/>
            <person name="Almeida J.P."/>
            <person name="Ambrose K.D."/>
            <person name="Anderson F."/>
            <person name="Andrew R.W."/>
            <person name="Ashwell R.I.S."/>
            <person name="Aubin K."/>
            <person name="Babbage A.K."/>
            <person name="Bagguley C.L."/>
            <person name="Bailey J."/>
            <person name="Beasley H."/>
            <person name="Bethel G."/>
            <person name="Bird C.P."/>
            <person name="Bray-Allen S."/>
            <person name="Brown J.Y."/>
            <person name="Brown A.J."/>
            <person name="Buckley D."/>
            <person name="Burton J."/>
            <person name="Bye J."/>
            <person name="Carder C."/>
            <person name="Chapman J.C."/>
            <person name="Clark S.Y."/>
            <person name="Clarke G."/>
            <person name="Clee C."/>
            <person name="Cobley V."/>
            <person name="Collier R.E."/>
            <person name="Corby N."/>
            <person name="Coville G.J."/>
            <person name="Davies J."/>
            <person name="Deadman R."/>
            <person name="Dunn M."/>
            <person name="Earthrowl M."/>
            <person name="Ellington A.G."/>
            <person name="Errington H."/>
            <person name="Frankish A."/>
            <person name="Frankland J."/>
            <person name="French L."/>
            <person name="Garner P."/>
            <person name="Garnett J."/>
            <person name="Gay L."/>
            <person name="Ghori M.R.J."/>
            <person name="Gibson R."/>
            <person name="Gilby L.M."/>
            <person name="Gillett W."/>
            <person name="Glithero R.J."/>
            <person name="Grafham D.V."/>
            <person name="Griffiths C."/>
            <person name="Griffiths-Jones S."/>
            <person name="Grocock R."/>
            <person name="Hammond S."/>
            <person name="Harrison E.S.I."/>
            <person name="Hart E."/>
            <person name="Haugen E."/>
            <person name="Heath P.D."/>
            <person name="Holmes S."/>
            <person name="Holt K."/>
            <person name="Howden P.J."/>
            <person name="Hunt A.R."/>
            <person name="Hunt S.E."/>
            <person name="Hunter G."/>
            <person name="Isherwood J."/>
            <person name="James R."/>
            <person name="Johnson C."/>
            <person name="Johnson D."/>
            <person name="Joy A."/>
            <person name="Kay M."/>
            <person name="Kershaw J.K."/>
            <person name="Kibukawa M."/>
            <person name="Kimberley A.M."/>
            <person name="King A."/>
            <person name="Knights A.J."/>
            <person name="Lad H."/>
            <person name="Laird G."/>
            <person name="Lawlor S."/>
            <person name="Leongamornlert D.A."/>
            <person name="Lloyd D.M."/>
            <person name="Loveland J."/>
            <person name="Lovell J."/>
            <person name="Lush M.J."/>
            <person name="Lyne R."/>
            <person name="Martin S."/>
            <person name="Mashreghi-Mohammadi M."/>
            <person name="Matthews L."/>
            <person name="Matthews N.S.W."/>
            <person name="McLaren S."/>
            <person name="Milne S."/>
            <person name="Mistry S."/>
            <person name="Moore M.J.F."/>
            <person name="Nickerson T."/>
            <person name="O'Dell C.N."/>
            <person name="Oliver K."/>
            <person name="Palmeiri A."/>
            <person name="Palmer S.A."/>
            <person name="Parker A."/>
            <person name="Patel D."/>
            <person name="Pearce A.V."/>
            <person name="Peck A.I."/>
            <person name="Pelan S."/>
            <person name="Phelps K."/>
            <person name="Phillimore B.J."/>
            <person name="Plumb R."/>
            <person name="Rajan J."/>
            <person name="Raymond C."/>
            <person name="Rouse G."/>
            <person name="Saenphimmachak C."/>
            <person name="Sehra H.K."/>
            <person name="Sheridan E."/>
            <person name="Shownkeen R."/>
            <person name="Sims S."/>
            <person name="Skuce C.D."/>
            <person name="Smith M."/>
            <person name="Steward C."/>
            <person name="Subramanian S."/>
            <person name="Sycamore N."/>
            <person name="Tracey A."/>
            <person name="Tromans A."/>
            <person name="Van Helmond Z."/>
            <person name="Wall M."/>
            <person name="Wallis J.M."/>
            <person name="White S."/>
            <person name="Whitehead S.L."/>
            <person name="Wilkinson J.E."/>
            <person name="Willey D.L."/>
            <person name="Williams H."/>
            <person name="Wilming L."/>
            <person name="Wray P.W."/>
            <person name="Wu Z."/>
            <person name="Coulson A."/>
            <person name="Vaudin M."/>
            <person name="Sulston J.E."/>
            <person name="Durbin R.M."/>
            <person name="Hubbard T."/>
            <person name="Wooster R."/>
            <person name="Dunham I."/>
            <person name="Carter N.P."/>
            <person name="McVean G."/>
            <person name="Ross M.T."/>
            <person name="Harrow J."/>
            <person name="Olson M.V."/>
            <person name="Beck S."/>
            <person name="Rogers J."/>
            <person name="Bentley D.R."/>
        </authorList>
    </citation>
    <scope>NUCLEOTIDE SEQUENCE [LARGE SCALE GENOMIC DNA]</scope>
</reference>
<reference key="2">
    <citation type="submission" date="2005-09" db="EMBL/GenBank/DDBJ databases">
        <authorList>
            <person name="Mural R.J."/>
            <person name="Istrail S."/>
            <person name="Sutton G.G."/>
            <person name="Florea L."/>
            <person name="Halpern A.L."/>
            <person name="Mobarry C.M."/>
            <person name="Lippert R."/>
            <person name="Walenz B."/>
            <person name="Shatkay H."/>
            <person name="Dew I."/>
            <person name="Miller J.R."/>
            <person name="Flanigan M.J."/>
            <person name="Edwards N.J."/>
            <person name="Bolanos R."/>
            <person name="Fasulo D."/>
            <person name="Halldorsson B.V."/>
            <person name="Hannenhalli S."/>
            <person name="Turner R."/>
            <person name="Yooseph S."/>
            <person name="Lu F."/>
            <person name="Nusskern D.R."/>
            <person name="Shue B.C."/>
            <person name="Zheng X.H."/>
            <person name="Zhong F."/>
            <person name="Delcher A.L."/>
            <person name="Huson D.H."/>
            <person name="Kravitz S.A."/>
            <person name="Mouchard L."/>
            <person name="Reinert K."/>
            <person name="Remington K.A."/>
            <person name="Clark A.G."/>
            <person name="Waterman M.S."/>
            <person name="Eichler E.E."/>
            <person name="Adams M.D."/>
            <person name="Hunkapiller M.W."/>
            <person name="Myers E.W."/>
            <person name="Venter J.C."/>
        </authorList>
    </citation>
    <scope>NUCLEOTIDE SEQUENCE [LARGE SCALE GENOMIC DNA]</scope>
</reference>
<reference key="3">
    <citation type="journal article" date="2004" name="Genome Res.">
        <title>The status, quality, and expansion of the NIH full-length cDNA project: the Mammalian Gene Collection (MGC).</title>
        <authorList>
            <consortium name="The MGC Project Team"/>
        </authorList>
    </citation>
    <scope>NUCLEOTIDE SEQUENCE [LARGE SCALE MRNA]</scope>
    <source>
        <tissue>Placenta</tissue>
    </source>
</reference>
<reference key="4">
    <citation type="journal article" date="2004" name="Nat. Genet.">
        <title>Complete sequencing and characterization of 21,243 full-length human cDNAs.</title>
        <authorList>
            <person name="Ota T."/>
            <person name="Suzuki Y."/>
            <person name="Nishikawa T."/>
            <person name="Otsuki T."/>
            <person name="Sugiyama T."/>
            <person name="Irie R."/>
            <person name="Wakamatsu A."/>
            <person name="Hayashi K."/>
            <person name="Sato H."/>
            <person name="Nagai K."/>
            <person name="Kimura K."/>
            <person name="Makita H."/>
            <person name="Sekine M."/>
            <person name="Obayashi M."/>
            <person name="Nishi T."/>
            <person name="Shibahara T."/>
            <person name="Tanaka T."/>
            <person name="Ishii S."/>
            <person name="Yamamoto J."/>
            <person name="Saito K."/>
            <person name="Kawai Y."/>
            <person name="Isono Y."/>
            <person name="Nakamura Y."/>
            <person name="Nagahari K."/>
            <person name="Murakami K."/>
            <person name="Yasuda T."/>
            <person name="Iwayanagi T."/>
            <person name="Wagatsuma M."/>
            <person name="Shiratori A."/>
            <person name="Sudo H."/>
            <person name="Hosoiri T."/>
            <person name="Kaku Y."/>
            <person name="Kodaira H."/>
            <person name="Kondo H."/>
            <person name="Sugawara M."/>
            <person name="Takahashi M."/>
            <person name="Kanda K."/>
            <person name="Yokoi T."/>
            <person name="Furuya T."/>
            <person name="Kikkawa E."/>
            <person name="Omura Y."/>
            <person name="Abe K."/>
            <person name="Kamihara K."/>
            <person name="Katsuta N."/>
            <person name="Sato K."/>
            <person name="Tanikawa M."/>
            <person name="Yamazaki M."/>
            <person name="Ninomiya K."/>
            <person name="Ishibashi T."/>
            <person name="Yamashita H."/>
            <person name="Murakawa K."/>
            <person name="Fujimori K."/>
            <person name="Tanai H."/>
            <person name="Kimata M."/>
            <person name="Watanabe M."/>
            <person name="Hiraoka S."/>
            <person name="Chiba Y."/>
            <person name="Ishida S."/>
            <person name="Ono Y."/>
            <person name="Takiguchi S."/>
            <person name="Watanabe S."/>
            <person name="Yosida M."/>
            <person name="Hotuta T."/>
            <person name="Kusano J."/>
            <person name="Kanehori K."/>
            <person name="Takahashi-Fujii A."/>
            <person name="Hara H."/>
            <person name="Tanase T.-O."/>
            <person name="Nomura Y."/>
            <person name="Togiya S."/>
            <person name="Komai F."/>
            <person name="Hara R."/>
            <person name="Takeuchi K."/>
            <person name="Arita M."/>
            <person name="Imose N."/>
            <person name="Musashino K."/>
            <person name="Yuuki H."/>
            <person name="Oshima A."/>
            <person name="Sasaki N."/>
            <person name="Aotsuka S."/>
            <person name="Yoshikawa Y."/>
            <person name="Matsunawa H."/>
            <person name="Ichihara T."/>
            <person name="Shiohata N."/>
            <person name="Sano S."/>
            <person name="Moriya S."/>
            <person name="Momiyama H."/>
            <person name="Satoh N."/>
            <person name="Takami S."/>
            <person name="Terashima Y."/>
            <person name="Suzuki O."/>
            <person name="Nakagawa S."/>
            <person name="Senoh A."/>
            <person name="Mizoguchi H."/>
            <person name="Goto Y."/>
            <person name="Shimizu F."/>
            <person name="Wakebe H."/>
            <person name="Hishigaki H."/>
            <person name="Watanabe T."/>
            <person name="Sugiyama A."/>
            <person name="Takemoto M."/>
            <person name="Kawakami B."/>
            <person name="Yamazaki M."/>
            <person name="Watanabe K."/>
            <person name="Kumagai A."/>
            <person name="Itakura S."/>
            <person name="Fukuzumi Y."/>
            <person name="Fujimori Y."/>
            <person name="Komiyama M."/>
            <person name="Tashiro H."/>
            <person name="Tanigami A."/>
            <person name="Fujiwara T."/>
            <person name="Ono T."/>
            <person name="Yamada K."/>
            <person name="Fujii Y."/>
            <person name="Ozaki K."/>
            <person name="Hirao M."/>
            <person name="Ohmori Y."/>
            <person name="Kawabata A."/>
            <person name="Hikiji T."/>
            <person name="Kobatake N."/>
            <person name="Inagaki H."/>
            <person name="Ikema Y."/>
            <person name="Okamoto S."/>
            <person name="Okitani R."/>
            <person name="Kawakami T."/>
            <person name="Noguchi S."/>
            <person name="Itoh T."/>
            <person name="Shigeta K."/>
            <person name="Senba T."/>
            <person name="Matsumura K."/>
            <person name="Nakajima Y."/>
            <person name="Mizuno T."/>
            <person name="Morinaga M."/>
            <person name="Sasaki M."/>
            <person name="Togashi T."/>
            <person name="Oyama M."/>
            <person name="Hata H."/>
            <person name="Watanabe M."/>
            <person name="Komatsu T."/>
            <person name="Mizushima-Sugano J."/>
            <person name="Satoh T."/>
            <person name="Shirai Y."/>
            <person name="Takahashi Y."/>
            <person name="Nakagawa K."/>
            <person name="Okumura K."/>
            <person name="Nagase T."/>
            <person name="Nomura N."/>
            <person name="Kikuchi H."/>
            <person name="Masuho Y."/>
            <person name="Yamashita R."/>
            <person name="Nakai K."/>
            <person name="Yada T."/>
            <person name="Nakamura Y."/>
            <person name="Ohara O."/>
            <person name="Isogai T."/>
            <person name="Sugano S."/>
        </authorList>
    </citation>
    <scope>NUCLEOTIDE SEQUENCE [LARGE SCALE MRNA] OF 175-858</scope>
</reference>
<reference key="5">
    <citation type="journal article" date="2003" name="Genome Res.">
        <title>The secreted protein discovery initiative (SPDI), a large-scale effort to identify novel human secreted and transmembrane proteins: a bioinformatics assessment.</title>
        <authorList>
            <person name="Clark H.F."/>
            <person name="Gurney A.L."/>
            <person name="Abaya E."/>
            <person name="Baker K."/>
            <person name="Baldwin D.T."/>
            <person name="Brush J."/>
            <person name="Chen J."/>
            <person name="Chow B."/>
            <person name="Chui C."/>
            <person name="Crowley C."/>
            <person name="Currell B."/>
            <person name="Deuel B."/>
            <person name="Dowd P."/>
            <person name="Eaton D."/>
            <person name="Foster J.S."/>
            <person name="Grimaldi C."/>
            <person name="Gu Q."/>
            <person name="Hass P.E."/>
            <person name="Heldens S."/>
            <person name="Huang A."/>
            <person name="Kim H.S."/>
            <person name="Klimowski L."/>
            <person name="Jin Y."/>
            <person name="Johnson S."/>
            <person name="Lee J."/>
            <person name="Lewis L."/>
            <person name="Liao D."/>
            <person name="Mark M.R."/>
            <person name="Robbie E."/>
            <person name="Sanchez C."/>
            <person name="Schoenfeld J."/>
            <person name="Seshagiri S."/>
            <person name="Simmons L."/>
            <person name="Singh J."/>
            <person name="Smith V."/>
            <person name="Stinson J."/>
            <person name="Vagts A."/>
            <person name="Vandlen R.L."/>
            <person name="Watanabe C."/>
            <person name="Wieand D."/>
            <person name="Woods K."/>
            <person name="Xie M.-H."/>
            <person name="Yansura D.G."/>
            <person name="Yi S."/>
            <person name="Yu G."/>
            <person name="Yuan J."/>
            <person name="Zhang M."/>
            <person name="Zhang Z."/>
            <person name="Goddard A.D."/>
            <person name="Wood W.I."/>
            <person name="Godowski P.J."/>
            <person name="Gray A.M."/>
        </authorList>
    </citation>
    <scope>NUCLEOTIDE SEQUENCE [LARGE SCALE MRNA] OF 335-858</scope>
</reference>
<reference key="6">
    <citation type="journal article" date="2012" name="Bioessays">
        <title>LRRC8 proteins share a common ancestor with pannexins, and may form hexameric channels involved in cell-cell communication.</title>
        <authorList>
            <person name="Abascal F."/>
            <person name="Zardoya R."/>
        </authorList>
    </citation>
    <scope>IDENTIFICATION</scope>
</reference>
<reference key="7">
    <citation type="journal article" date="2008" name="Proc. Natl. Acad. Sci. U.S.A.">
        <title>A quantitative atlas of mitotic phosphorylation.</title>
        <authorList>
            <person name="Dephoure N."/>
            <person name="Zhou C."/>
            <person name="Villen J."/>
            <person name="Beausoleil S.A."/>
            <person name="Bakalarski C.E."/>
            <person name="Elledge S.J."/>
            <person name="Gygi S.P."/>
        </authorList>
    </citation>
    <scope>PHOSPHORYLATION [LARGE SCALE ANALYSIS] AT SER-241 AND SER-242</scope>
    <scope>IDENTIFICATION BY MASS SPECTROMETRY [LARGE SCALE ANALYSIS]</scope>
    <source>
        <tissue>Cervix carcinoma</tissue>
    </source>
</reference>
<reference key="8">
    <citation type="journal article" date="2010" name="Sci. Signal.">
        <title>Quantitative phosphoproteomics reveals widespread full phosphorylation site occupancy during mitosis.</title>
        <authorList>
            <person name="Olsen J.V."/>
            <person name="Vermeulen M."/>
            <person name="Santamaria A."/>
            <person name="Kumar C."/>
            <person name="Miller M.L."/>
            <person name="Jensen L.J."/>
            <person name="Gnad F."/>
            <person name="Cox J."/>
            <person name="Jensen T.S."/>
            <person name="Nigg E.A."/>
            <person name="Brunak S."/>
            <person name="Mann M."/>
        </authorList>
    </citation>
    <scope>PHOSPHORYLATION [LARGE SCALE ANALYSIS] AT SER-246</scope>
    <scope>IDENTIFICATION BY MASS SPECTROMETRY [LARGE SCALE ANALYSIS]</scope>
    <source>
        <tissue>Cervix carcinoma</tissue>
    </source>
</reference>
<reference key="9">
    <citation type="journal article" date="2013" name="J. Proteome Res.">
        <title>Toward a comprehensive characterization of a human cancer cell phosphoproteome.</title>
        <authorList>
            <person name="Zhou H."/>
            <person name="Di Palma S."/>
            <person name="Preisinger C."/>
            <person name="Peng M."/>
            <person name="Polat A.N."/>
            <person name="Heck A.J."/>
            <person name="Mohammed S."/>
        </authorList>
    </citation>
    <scope>PHOSPHORYLATION [LARGE SCALE ANALYSIS] AT SER-246</scope>
    <scope>IDENTIFICATION BY MASS SPECTROMETRY [LARGE SCALE ANALYSIS]</scope>
    <source>
        <tissue>Cervix carcinoma</tissue>
    </source>
</reference>
<reference key="10">
    <citation type="journal article" date="2014" name="J. Biol. Chem.">
        <title>The protein synthesis inhibitor blasticidin S enters mammalian cells via leucine-rich repeat-containing protein 8D.</title>
        <authorList>
            <person name="Lee C.C."/>
            <person name="Freinkman E."/>
            <person name="Sabatini D.M."/>
            <person name="Ploegh H.L."/>
        </authorList>
    </citation>
    <scope>FUNCTION</scope>
    <scope>SUBCELLULAR LOCATION</scope>
    <scope>TOPOLOGY</scope>
    <scope>INTERACTION WITH LRRC8A; LRRC8B AND LRRC8C</scope>
</reference>
<reference key="11">
    <citation type="journal article" date="2014" name="Science">
        <title>Identification of LRRC8 heteromers as an essential component of the volume-regulated anion channel VRAC.</title>
        <authorList>
            <person name="Voss F.K."/>
            <person name="Ullrich F."/>
            <person name="Muench J."/>
            <person name="Lazarow K."/>
            <person name="Lutter D."/>
            <person name="Mah N."/>
            <person name="Andrade-Navarro M.A."/>
            <person name="von Kries J.P."/>
            <person name="Stauber T."/>
            <person name="Jentsch T.J."/>
        </authorList>
    </citation>
    <scope>FUNCTION</scope>
    <scope>TRANSPORTER ACTIVITY</scope>
    <scope>INTERACTION WITH LRRC8A</scope>
    <scope>SUBCELLULAR LOCATION</scope>
</reference>
<reference key="12">
    <citation type="journal article" date="2015" name="EMBO J.">
        <title>Subunit composition of VRAC channels determines substrate specificity and cellular resistance to Pt-based anti-cancer drugs.</title>
        <authorList>
            <person name="Planells-Cases R."/>
            <person name="Lutter D."/>
            <person name="Guyader C."/>
            <person name="Gerhards N.M."/>
            <person name="Ullrich F."/>
            <person name="Elger D.A."/>
            <person name="Kucukosmanoglu A."/>
            <person name="Xu G."/>
            <person name="Voss F.K."/>
            <person name="Reincke S.M."/>
            <person name="Stauber T."/>
            <person name="Blomen V.A."/>
            <person name="Vis D.J."/>
            <person name="Wessels L.F."/>
            <person name="Brummelkamp T.R."/>
            <person name="Borst P."/>
            <person name="Rottenberg S."/>
            <person name="Jentsch T.J."/>
        </authorList>
    </citation>
    <scope>FUNCTION</scope>
</reference>
<reference key="13">
    <citation type="journal article" date="2016" name="Cell">
        <title>LRRC8 proteins form volume-regulated anion channels that sense ionic strength.</title>
        <authorList>
            <person name="Syeda R."/>
            <person name="Qiu Z."/>
            <person name="Dubin A.E."/>
            <person name="Murthy S.E."/>
            <person name="Florendo M.N."/>
            <person name="Mason D.E."/>
            <person name="Mathur J."/>
            <person name="Cahalan S.M."/>
            <person name="Peters E.C."/>
            <person name="Montal M."/>
            <person name="Patapoutian A."/>
        </authorList>
    </citation>
    <scope>FUNCTION</scope>
    <scope>SUBCELLULAR LOCATION</scope>
    <scope>SUBUNIT</scope>
    <scope>IDENTIFICATION BY MASS SPECTROMETRY</scope>
    <scope>MUTAGENESIS OF THR-44</scope>
</reference>
<reference key="14">
    <citation type="journal article" date="2017" name="J. Cell Sci.">
        <title>Selective transport of neurotransmitters and modulators by distinct volume-regulated LRRC8 anion channels.</title>
        <authorList>
            <person name="Lutter D."/>
            <person name="Ullrich F."/>
            <person name="Lueck J.C."/>
            <person name="Kempa S."/>
            <person name="Jentsch T.J."/>
        </authorList>
    </citation>
    <scope>FUNCTION</scope>
    <scope>SUBUNIT</scope>
    <scope>SUBCELLULAR LOCATION</scope>
</reference>
<reference key="15">
    <citation type="journal article" date="2020" name="Mol. Cell">
        <title>LRRC8A:C/E heteromeric channels are ubiquitous transporters of cGAMP.</title>
        <authorList>
            <person name="Lahey L.J."/>
            <person name="Mardjuki R.E."/>
            <person name="Wen X."/>
            <person name="Hess G.T."/>
            <person name="Ritchie C."/>
            <person name="Carozza J.A."/>
            <person name="Boehnert V."/>
            <person name="Maduke M."/>
            <person name="Bassik M.C."/>
            <person name="Li L."/>
        </authorList>
    </citation>
    <scope>FUNCTION</scope>
</reference>
<reference evidence="17" key="16">
    <citation type="journal article" date="2020" name="Commun. Biol.">
        <title>Cryo-EM structure of the volume-regulated anion channel LRRC8D isoform identifies features important for substrate permeation.</title>
        <authorList>
            <person name="Nakamura R."/>
            <person name="Numata T."/>
            <person name="Kasuya G."/>
            <person name="Yokoyama T."/>
            <person name="Nishizawa T."/>
            <person name="Kusakizako T."/>
            <person name="Kato T."/>
            <person name="Hagino T."/>
            <person name="Dohmae N."/>
            <person name="Inoue M."/>
            <person name="Watanabe K."/>
            <person name="Ichijo H."/>
            <person name="Kikkawa M."/>
            <person name="Shirouzu M."/>
            <person name="Jentsch T.J."/>
            <person name="Ishitani R."/>
            <person name="Okada Y."/>
            <person name="Nureki O."/>
        </authorList>
    </citation>
    <scope>STRUCTURE BY ELECTRON MICROSCOPY (4.36 ANGSTROMS)</scope>
    <scope>FUNCTION</scope>
    <scope>SUBUNIT</scope>
    <scope>TOPOLOGY</scope>
    <scope>DISULFIDE BOND</scope>
    <scope>DOMAIN</scope>
    <scope>MUTAGENESIS OF PHE-143</scope>
</reference>
<sequence length="858" mass="98201">MFTLAEVASLNDIQPTYRILKPWWDVFMDYLAVVMLMVAIFAGTMQLTKDQVVCLPVLPSPVNSKAHTPPGNAEVTTNIPKMEAATNQDQDGRTTNDISFGTSAVTPDIPLRATYPRTDFALPNQEAKKEKKDPTGRKTNLDFQQYVFINQMCYHLALPWYSKYFPYLALIHTIILMVSSNFWFKYPKTCSKVEHFVSILGKCFESPWTTKALSETACEDSEENKQRITGAQTLPKHVSTSSDEGSPSASTPMINKTGFKFSAEKPVIEVPSMTILDKKDGEQAKALFEKVRKFRAHVEDSDLIYKLYVVQTVIKTAKFIFILCYTANFVNAISFEHVCKPKVEHLIGYEVFECTHNMAYMLKKLLISYISIICVYGFICLYTLFWLFRIPLKEYSFEKVREESSFSDIPDVKNDFAFLLHMVDQYDQLYSKRFGVFLSEVSENKLREISLNHEWTFEKLRQHISRNAQDKQELHLFMLSGVPDAVFDLTDLDVLKLELIPEAKIPAKISQMTNLQELHLCHCPAKVEQTAFSFLRDHLRCLHVKFTDVAEIPAWVYLLKNLRELYLIGNLNSENNKMIGLESLRELRHLKILHVKSNLTKVPSNITDVAPHLTKLVIHNDGTKLLVLNSLKKMMNVAELELQNCELERIPHAIFSLSNLQELDLKSNNIRTIEEIISFQHLKRLTCLKLWHNKIVTIPPSITHVKNLESLYFSNNKLESLPVAVFSLQKLRCLDVSYNNISMIPIEIGLLQNLQHLHITGNKVDILPKQLFKCIKLRTLNLGQNCITSLPEKVGQLSQLTQLELKGNCLDRLPAQLGQCRMLKKSGLVVEDHLFDTLPLEVKEALNQDINIPFANGI</sequence>
<keyword id="KW-0002">3D-structure</keyword>
<keyword id="KW-1003">Cell membrane</keyword>
<keyword id="KW-1015">Disulfide bond</keyword>
<keyword id="KW-0256">Endoplasmic reticulum</keyword>
<keyword id="KW-0407">Ion channel</keyword>
<keyword id="KW-0406">Ion transport</keyword>
<keyword id="KW-0433">Leucine-rich repeat</keyword>
<keyword id="KW-0472">Membrane</keyword>
<keyword id="KW-0597">Phosphoprotein</keyword>
<keyword id="KW-1267">Proteomics identification</keyword>
<keyword id="KW-1185">Reference proteome</keyword>
<keyword id="KW-0677">Repeat</keyword>
<keyword id="KW-0812">Transmembrane</keyword>
<keyword id="KW-1133">Transmembrane helix</keyword>
<keyword id="KW-0813">Transport</keyword>
<accession>Q7L1W4</accession>
<accession>D3DT29</accession>
<accession>Q6UWB2</accession>
<accession>Q9NVW3</accession>
<proteinExistence type="evidence at protein level"/>
<name>LRC8D_HUMAN</name>
<dbReference type="EMBL" id="AL391497">
    <property type="status" value="NOT_ANNOTATED_CDS"/>
    <property type="molecule type" value="Genomic_DNA"/>
</dbReference>
<dbReference type="EMBL" id="CH471097">
    <property type="protein sequence ID" value="EAW73130.1"/>
    <property type="molecule type" value="Genomic_DNA"/>
</dbReference>
<dbReference type="EMBL" id="CH471097">
    <property type="protein sequence ID" value="EAW73131.1"/>
    <property type="molecule type" value="Genomic_DNA"/>
</dbReference>
<dbReference type="EMBL" id="CH471097">
    <property type="protein sequence ID" value="EAW73132.1"/>
    <property type="molecule type" value="Genomic_DNA"/>
</dbReference>
<dbReference type="EMBL" id="BC024159">
    <property type="protein sequence ID" value="AAH24159.2"/>
    <property type="molecule type" value="mRNA"/>
</dbReference>
<dbReference type="EMBL" id="AK001332">
    <property type="protein sequence ID" value="BAA91631.1"/>
    <property type="status" value="ALT_INIT"/>
    <property type="molecule type" value="mRNA"/>
</dbReference>
<dbReference type="EMBL" id="AY358874">
    <property type="protein sequence ID" value="AAQ89233.1"/>
    <property type="status" value="ALT_INIT"/>
    <property type="molecule type" value="mRNA"/>
</dbReference>
<dbReference type="CCDS" id="CCDS726.1"/>
<dbReference type="RefSeq" id="NP_001127951.1">
    <property type="nucleotide sequence ID" value="NM_001134479.2"/>
</dbReference>
<dbReference type="RefSeq" id="NP_060573.2">
    <property type="nucleotide sequence ID" value="NM_018103.4"/>
</dbReference>
<dbReference type="RefSeq" id="XP_011539991.1">
    <property type="nucleotide sequence ID" value="XM_011541689.2"/>
</dbReference>
<dbReference type="RefSeq" id="XP_016857088.1">
    <property type="nucleotide sequence ID" value="XM_017001599.1"/>
</dbReference>
<dbReference type="RefSeq" id="XP_016857089.1">
    <property type="nucleotide sequence ID" value="XM_017001600.1"/>
</dbReference>
<dbReference type="RefSeq" id="XP_016857090.1">
    <property type="nucleotide sequence ID" value="XM_017001601.1"/>
</dbReference>
<dbReference type="RefSeq" id="XP_016857091.1">
    <property type="nucleotide sequence ID" value="XM_017001602.1"/>
</dbReference>
<dbReference type="RefSeq" id="XP_047279896.1">
    <property type="nucleotide sequence ID" value="XM_047423940.1"/>
</dbReference>
<dbReference type="RefSeq" id="XP_047279899.1">
    <property type="nucleotide sequence ID" value="XM_047423943.1"/>
</dbReference>
<dbReference type="RefSeq" id="XP_047279900.1">
    <property type="nucleotide sequence ID" value="XM_047423944.1"/>
</dbReference>
<dbReference type="RefSeq" id="XP_047279902.1">
    <property type="nucleotide sequence ID" value="XM_047423946.1"/>
</dbReference>
<dbReference type="RefSeq" id="XP_047279903.1">
    <property type="nucleotide sequence ID" value="XM_047423947.1"/>
</dbReference>
<dbReference type="RefSeq" id="XP_047279906.1">
    <property type="nucleotide sequence ID" value="XM_047423950.1"/>
</dbReference>
<dbReference type="RefSeq" id="XP_047279909.1">
    <property type="nucleotide sequence ID" value="XM_047423953.1"/>
</dbReference>
<dbReference type="RefSeq" id="XP_047279910.1">
    <property type="nucleotide sequence ID" value="XM_047423954.1"/>
</dbReference>
<dbReference type="RefSeq" id="XP_047279912.1">
    <property type="nucleotide sequence ID" value="XM_047423956.1"/>
</dbReference>
<dbReference type="RefSeq" id="XP_047279917.1">
    <property type="nucleotide sequence ID" value="XM_047423961.1"/>
</dbReference>
<dbReference type="RefSeq" id="XP_054193319.1">
    <property type="nucleotide sequence ID" value="XM_054337344.1"/>
</dbReference>
<dbReference type="RefSeq" id="XP_054193320.1">
    <property type="nucleotide sequence ID" value="XM_054337345.1"/>
</dbReference>
<dbReference type="RefSeq" id="XP_054193321.1">
    <property type="nucleotide sequence ID" value="XM_054337346.1"/>
</dbReference>
<dbReference type="RefSeq" id="XP_054193322.1">
    <property type="nucleotide sequence ID" value="XM_054337347.1"/>
</dbReference>
<dbReference type="RefSeq" id="XP_054193323.1">
    <property type="nucleotide sequence ID" value="XM_054337348.1"/>
</dbReference>
<dbReference type="RefSeq" id="XP_054193324.1">
    <property type="nucleotide sequence ID" value="XM_054337349.1"/>
</dbReference>
<dbReference type="RefSeq" id="XP_054193325.1">
    <property type="nucleotide sequence ID" value="XM_054337350.1"/>
</dbReference>
<dbReference type="RefSeq" id="XP_054193326.1">
    <property type="nucleotide sequence ID" value="XM_054337351.1"/>
</dbReference>
<dbReference type="RefSeq" id="XP_054193327.1">
    <property type="nucleotide sequence ID" value="XM_054337352.1"/>
</dbReference>
<dbReference type="RefSeq" id="XP_054193328.1">
    <property type="nucleotide sequence ID" value="XM_054337353.1"/>
</dbReference>
<dbReference type="RefSeq" id="XP_054193329.1">
    <property type="nucleotide sequence ID" value="XM_054337354.1"/>
</dbReference>
<dbReference type="RefSeq" id="XP_054193330.1">
    <property type="nucleotide sequence ID" value="XM_054337355.1"/>
</dbReference>
<dbReference type="RefSeq" id="XP_054193331.1">
    <property type="nucleotide sequence ID" value="XM_054337356.1"/>
</dbReference>
<dbReference type="RefSeq" id="XP_054193332.1">
    <property type="nucleotide sequence ID" value="XM_054337357.1"/>
</dbReference>
<dbReference type="RefSeq" id="XP_054193333.1">
    <property type="nucleotide sequence ID" value="XM_054337358.1"/>
</dbReference>
<dbReference type="RefSeq" id="XP_054193334.1">
    <property type="nucleotide sequence ID" value="XM_054337359.1"/>
</dbReference>
<dbReference type="PDB" id="6M04">
    <property type="method" value="EM"/>
    <property type="resolution" value="4.36 A"/>
    <property type="chains" value="A/B/C/D/E/F=1-858"/>
</dbReference>
<dbReference type="PDBsum" id="6M04"/>
<dbReference type="EMDB" id="EMD-30029"/>
<dbReference type="SMR" id="Q7L1W4"/>
<dbReference type="BioGRID" id="120447">
    <property type="interactions" value="37"/>
</dbReference>
<dbReference type="CORUM" id="Q7L1W4"/>
<dbReference type="DIP" id="DIP-31280N"/>
<dbReference type="FunCoup" id="Q7L1W4">
    <property type="interactions" value="622"/>
</dbReference>
<dbReference type="IntAct" id="Q7L1W4">
    <property type="interactions" value="19"/>
</dbReference>
<dbReference type="MINT" id="Q7L1W4"/>
<dbReference type="STRING" id="9606.ENSP00000338887"/>
<dbReference type="TCDB" id="1.A.25.3.1">
    <property type="family name" value="the gap junction-forming innexin (innexin) family"/>
</dbReference>
<dbReference type="GlyCosmos" id="Q7L1W4">
    <property type="glycosylation" value="2 sites, 1 glycan"/>
</dbReference>
<dbReference type="GlyGen" id="Q7L1W4">
    <property type="glycosylation" value="8 sites, 1 N-linked glycan (1 site), 3 O-linked glycans (7 sites)"/>
</dbReference>
<dbReference type="iPTMnet" id="Q7L1W4"/>
<dbReference type="PhosphoSitePlus" id="Q7L1W4"/>
<dbReference type="SwissPalm" id="Q7L1W4"/>
<dbReference type="BioMuta" id="LRRC8D"/>
<dbReference type="DMDM" id="51701663"/>
<dbReference type="jPOST" id="Q7L1W4"/>
<dbReference type="MassIVE" id="Q7L1W4"/>
<dbReference type="PaxDb" id="9606-ENSP00000338887"/>
<dbReference type="PeptideAtlas" id="Q7L1W4"/>
<dbReference type="ProteomicsDB" id="68752"/>
<dbReference type="Pumba" id="Q7L1W4"/>
<dbReference type="TopDownProteomics" id="Q7L1W4"/>
<dbReference type="Antibodypedia" id="2631">
    <property type="antibodies" value="49 antibodies from 18 providers"/>
</dbReference>
<dbReference type="DNASU" id="55144"/>
<dbReference type="Ensembl" id="ENST00000337338.9">
    <property type="protein sequence ID" value="ENSP00000338887.5"/>
    <property type="gene ID" value="ENSG00000171492.14"/>
</dbReference>
<dbReference type="Ensembl" id="ENST00000394593.7">
    <property type="protein sequence ID" value="ENSP00000378093.3"/>
    <property type="gene ID" value="ENSG00000171492.14"/>
</dbReference>
<dbReference type="GeneID" id="55144"/>
<dbReference type="KEGG" id="hsa:55144"/>
<dbReference type="MANE-Select" id="ENST00000337338.9">
    <property type="protein sequence ID" value="ENSP00000338887.5"/>
    <property type="RefSeq nucleotide sequence ID" value="NM_001134479.2"/>
    <property type="RefSeq protein sequence ID" value="NP_001127951.1"/>
</dbReference>
<dbReference type="UCSC" id="uc001dnm.4">
    <property type="organism name" value="human"/>
</dbReference>
<dbReference type="AGR" id="HGNC:16992"/>
<dbReference type="CTD" id="55144"/>
<dbReference type="DisGeNET" id="55144"/>
<dbReference type="GeneCards" id="LRRC8D"/>
<dbReference type="HGNC" id="HGNC:16992">
    <property type="gene designation" value="LRRC8D"/>
</dbReference>
<dbReference type="HPA" id="ENSG00000171492">
    <property type="expression patterns" value="Low tissue specificity"/>
</dbReference>
<dbReference type="MIM" id="612890">
    <property type="type" value="gene"/>
</dbReference>
<dbReference type="neXtProt" id="NX_Q7L1W4"/>
<dbReference type="OpenTargets" id="ENSG00000171492"/>
<dbReference type="PharmGKB" id="PA30464"/>
<dbReference type="VEuPathDB" id="HostDB:ENSG00000171492"/>
<dbReference type="eggNOG" id="KOG0619">
    <property type="taxonomic scope" value="Eukaryota"/>
</dbReference>
<dbReference type="GeneTree" id="ENSGT00940000154043"/>
<dbReference type="HOGENOM" id="CLU_019019_0_0_1"/>
<dbReference type="InParanoid" id="Q7L1W4"/>
<dbReference type="OMA" id="FANGCKC"/>
<dbReference type="OrthoDB" id="676979at2759"/>
<dbReference type="PAN-GO" id="Q7L1W4">
    <property type="GO annotations" value="0 GO annotations based on evolutionary models"/>
</dbReference>
<dbReference type="PhylomeDB" id="Q7L1W4"/>
<dbReference type="TreeFam" id="TF331443"/>
<dbReference type="PathwayCommons" id="Q7L1W4"/>
<dbReference type="Reactome" id="R-HSA-5223345">
    <property type="pathway name" value="Miscellaneous transport and binding events"/>
</dbReference>
<dbReference type="SignaLink" id="Q7L1W4"/>
<dbReference type="BioGRID-ORCS" id="55144">
    <property type="hits" value="13 hits in 1154 CRISPR screens"/>
</dbReference>
<dbReference type="ChiTaRS" id="LRRC8D">
    <property type="organism name" value="human"/>
</dbReference>
<dbReference type="GeneWiki" id="LRRC8D"/>
<dbReference type="GenomeRNAi" id="55144"/>
<dbReference type="Pharos" id="Q7L1W4">
    <property type="development level" value="Tbio"/>
</dbReference>
<dbReference type="PRO" id="PR:Q7L1W4"/>
<dbReference type="Proteomes" id="UP000005640">
    <property type="component" value="Chromosome 1"/>
</dbReference>
<dbReference type="RNAct" id="Q7L1W4">
    <property type="molecule type" value="protein"/>
</dbReference>
<dbReference type="Bgee" id="ENSG00000171492">
    <property type="expression patterns" value="Expressed in inferior vagus X ganglion and 206 other cell types or tissues"/>
</dbReference>
<dbReference type="ExpressionAtlas" id="Q7L1W4">
    <property type="expression patterns" value="baseline and differential"/>
</dbReference>
<dbReference type="GO" id="GO:0005737">
    <property type="term" value="C:cytoplasm"/>
    <property type="evidence" value="ECO:0000314"/>
    <property type="project" value="UniProtKB"/>
</dbReference>
<dbReference type="GO" id="GO:0005789">
    <property type="term" value="C:endoplasmic reticulum membrane"/>
    <property type="evidence" value="ECO:0007669"/>
    <property type="project" value="UniProtKB-SubCell"/>
</dbReference>
<dbReference type="GO" id="GO:0016020">
    <property type="term" value="C:membrane"/>
    <property type="evidence" value="ECO:0000314"/>
    <property type="project" value="UniProtKB"/>
</dbReference>
<dbReference type="GO" id="GO:0034702">
    <property type="term" value="C:monoatomic ion channel complex"/>
    <property type="evidence" value="ECO:0000315"/>
    <property type="project" value="UniProtKB"/>
</dbReference>
<dbReference type="GO" id="GO:0005886">
    <property type="term" value="C:plasma membrane"/>
    <property type="evidence" value="ECO:0000314"/>
    <property type="project" value="UniProtKB"/>
</dbReference>
<dbReference type="GO" id="GO:0005225">
    <property type="term" value="F:volume-sensitive anion channel activity"/>
    <property type="evidence" value="ECO:0000314"/>
    <property type="project" value="UniProtKB"/>
</dbReference>
<dbReference type="GO" id="GO:0015810">
    <property type="term" value="P:aspartate transmembrane transport"/>
    <property type="evidence" value="ECO:0000315"/>
    <property type="project" value="UniProtKB"/>
</dbReference>
<dbReference type="GO" id="GO:0071470">
    <property type="term" value="P:cellular response to osmotic stress"/>
    <property type="evidence" value="ECO:0000315"/>
    <property type="project" value="UniProtKB"/>
</dbReference>
<dbReference type="GO" id="GO:0001678">
    <property type="term" value="P:intracellular glucose homeostasis"/>
    <property type="evidence" value="ECO:0000250"/>
    <property type="project" value="UniProtKB"/>
</dbReference>
<dbReference type="GO" id="GO:0035556">
    <property type="term" value="P:intracellular signal transduction"/>
    <property type="evidence" value="ECO:0000318"/>
    <property type="project" value="GO_Central"/>
</dbReference>
<dbReference type="GO" id="GO:0098656">
    <property type="term" value="P:monoatomic anion transmembrane transport"/>
    <property type="evidence" value="ECO:0000314"/>
    <property type="project" value="UniProtKB"/>
</dbReference>
<dbReference type="GO" id="GO:0034214">
    <property type="term" value="P:protein hexamerization"/>
    <property type="evidence" value="ECO:0000314"/>
    <property type="project" value="UniProtKB"/>
</dbReference>
<dbReference type="GO" id="GO:0015734">
    <property type="term" value="P:taurine transmembrane transport"/>
    <property type="evidence" value="ECO:0000315"/>
    <property type="project" value="UniProtKB"/>
</dbReference>
<dbReference type="FunFam" id="3.80.10.10:FF:000123">
    <property type="entry name" value="Volume-regulated anion channel subunit LRRC8D"/>
    <property type="match status" value="1"/>
</dbReference>
<dbReference type="Gene3D" id="3.80.10.10">
    <property type="entry name" value="Ribonuclease Inhibitor"/>
    <property type="match status" value="3"/>
</dbReference>
<dbReference type="InterPro" id="IPR001611">
    <property type="entry name" value="Leu-rich_rpt"/>
</dbReference>
<dbReference type="InterPro" id="IPR003591">
    <property type="entry name" value="Leu-rich_rpt_typical-subtyp"/>
</dbReference>
<dbReference type="InterPro" id="IPR032675">
    <property type="entry name" value="LRR_dom_sf"/>
</dbReference>
<dbReference type="InterPro" id="IPR050216">
    <property type="entry name" value="LRR_domain-containing"/>
</dbReference>
<dbReference type="InterPro" id="IPR021040">
    <property type="entry name" value="LRRC8_Pannexin-like"/>
</dbReference>
<dbReference type="PANTHER" id="PTHR48051">
    <property type="match status" value="1"/>
</dbReference>
<dbReference type="PANTHER" id="PTHR48051:SF54">
    <property type="entry name" value="LEUCINE-RICH REPEAT-CONTAINING PROTEIN"/>
    <property type="match status" value="1"/>
</dbReference>
<dbReference type="Pfam" id="PF13855">
    <property type="entry name" value="LRR_8"/>
    <property type="match status" value="2"/>
</dbReference>
<dbReference type="Pfam" id="PF12534">
    <property type="entry name" value="Pannexin_like"/>
    <property type="match status" value="1"/>
</dbReference>
<dbReference type="SMART" id="SM00365">
    <property type="entry name" value="LRR_SD22"/>
    <property type="match status" value="3"/>
</dbReference>
<dbReference type="SMART" id="SM00369">
    <property type="entry name" value="LRR_TYP"/>
    <property type="match status" value="7"/>
</dbReference>
<dbReference type="SUPFAM" id="SSF52058">
    <property type="entry name" value="L domain-like"/>
    <property type="match status" value="1"/>
</dbReference>
<dbReference type="PROSITE" id="PS51450">
    <property type="entry name" value="LRR"/>
    <property type="match status" value="9"/>
</dbReference>
<gene>
    <name evidence="11 16" type="primary">LRRC8D</name>
    <name evidence="16" type="synonym">LRRC5</name>
    <name evidence="10" type="ORF">UNQ213/PRO239</name>
</gene>
<protein>
    <recommendedName>
        <fullName evidence="1">Volume-regulated anion channel subunit LRRC8D</fullName>
    </recommendedName>
    <alternativeName>
        <fullName evidence="16">Leucine-rich repeat-containing protein 5</fullName>
    </alternativeName>
    <alternativeName>
        <fullName evidence="11">Leucine-rich repeat-containing protein 8D</fullName>
        <shortName evidence="12">HsLRRC8D</shortName>
    </alternativeName>
</protein>